<protein>
    <recommendedName>
        <fullName evidence="1">Phosphoribosylformylglycinamidine synthase subunit PurL</fullName>
        <shortName evidence="1">FGAM synthase</shortName>
        <ecNumber evidence="1">6.3.5.3</ecNumber>
    </recommendedName>
    <alternativeName>
        <fullName evidence="1">Formylglycinamide ribonucleotide amidotransferase subunit II</fullName>
        <shortName evidence="1">FGAR amidotransferase II</shortName>
        <shortName evidence="1">FGAR-AT II</shortName>
    </alternativeName>
    <alternativeName>
        <fullName evidence="1">Glutamine amidotransferase PurL</fullName>
    </alternativeName>
    <alternativeName>
        <fullName evidence="1">Phosphoribosylformylglycinamidine synthase subunit II</fullName>
    </alternativeName>
</protein>
<keyword id="KW-0067">ATP-binding</keyword>
<keyword id="KW-0963">Cytoplasm</keyword>
<keyword id="KW-0436">Ligase</keyword>
<keyword id="KW-0460">Magnesium</keyword>
<keyword id="KW-0479">Metal-binding</keyword>
<keyword id="KW-0547">Nucleotide-binding</keyword>
<keyword id="KW-0658">Purine biosynthesis</keyword>
<keyword id="KW-1185">Reference proteome</keyword>
<proteinExistence type="inferred from homology"/>
<gene>
    <name evidence="1" type="primary">purL</name>
    <name type="synonym">pur-q</name>
    <name type="ordered locus">ZMO0820</name>
</gene>
<reference key="1">
    <citation type="submission" date="1999-12" db="EMBL/GenBank/DDBJ databases">
        <authorList>
            <person name="Um H.W."/>
            <person name="Kang H.S."/>
        </authorList>
    </citation>
    <scope>NUCLEOTIDE SEQUENCE [GENOMIC DNA]</scope>
    <source>
        <strain>ATCC 31821 / ZM4 / CP4</strain>
    </source>
</reference>
<reference key="2">
    <citation type="journal article" date="2005" name="Nat. Biotechnol.">
        <title>The genome sequence of the ethanologenic bacterium Zymomonas mobilis ZM4.</title>
        <authorList>
            <person name="Seo J.-S."/>
            <person name="Chong H."/>
            <person name="Park H.S."/>
            <person name="Yoon K.-O."/>
            <person name="Jung C."/>
            <person name="Kim J.J."/>
            <person name="Hong J.H."/>
            <person name="Kim H."/>
            <person name="Kim J.-H."/>
            <person name="Kil J.-I."/>
            <person name="Park C.J."/>
            <person name="Oh H.-M."/>
            <person name="Lee J.-S."/>
            <person name="Jin S.-J."/>
            <person name="Um H.-W."/>
            <person name="Lee H.-J."/>
            <person name="Oh S.-J."/>
            <person name="Kim J.Y."/>
            <person name="Kang H.L."/>
            <person name="Lee S.Y."/>
            <person name="Lee K.J."/>
            <person name="Kang H.S."/>
        </authorList>
    </citation>
    <scope>NUCLEOTIDE SEQUENCE [LARGE SCALE GENOMIC DNA]</scope>
    <source>
        <strain>ATCC 31821 / ZM4 / CP4</strain>
    </source>
</reference>
<evidence type="ECO:0000255" key="1">
    <source>
        <dbReference type="HAMAP-Rule" id="MF_00420"/>
    </source>
</evidence>
<evidence type="ECO:0000305" key="2"/>
<accession>Q9REQ6</accession>
<accession>Q5NPB6</accession>
<name>PURL_ZYMMO</name>
<feature type="chain" id="PRO_0000100508" description="Phosphoribosylformylglycinamidine synthase subunit PurL">
    <location>
        <begin position="1"/>
        <end position="734"/>
    </location>
</feature>
<feature type="active site" evidence="1">
    <location>
        <position position="49"/>
    </location>
</feature>
<feature type="active site" description="Proton acceptor" evidence="1">
    <location>
        <position position="95"/>
    </location>
</feature>
<feature type="binding site" evidence="1">
    <location>
        <position position="52"/>
    </location>
    <ligand>
        <name>ATP</name>
        <dbReference type="ChEBI" id="CHEBI:30616"/>
    </ligand>
</feature>
<feature type="binding site" evidence="1">
    <location>
        <position position="91"/>
    </location>
    <ligand>
        <name>ATP</name>
        <dbReference type="ChEBI" id="CHEBI:30616"/>
    </ligand>
</feature>
<feature type="binding site" evidence="1">
    <location>
        <position position="93"/>
    </location>
    <ligand>
        <name>Mg(2+)</name>
        <dbReference type="ChEBI" id="CHEBI:18420"/>
        <label>1</label>
    </ligand>
</feature>
<feature type="binding site" evidence="1">
    <location>
        <begin position="94"/>
        <end position="97"/>
    </location>
    <ligand>
        <name>substrate</name>
    </ligand>
</feature>
<feature type="binding site" evidence="1">
    <location>
        <position position="116"/>
    </location>
    <ligand>
        <name>substrate</name>
    </ligand>
</feature>
<feature type="binding site" evidence="1">
    <location>
        <position position="117"/>
    </location>
    <ligand>
        <name>Mg(2+)</name>
        <dbReference type="ChEBI" id="CHEBI:18420"/>
        <label>2</label>
    </ligand>
</feature>
<feature type="binding site" evidence="1">
    <location>
        <position position="240"/>
    </location>
    <ligand>
        <name>substrate</name>
    </ligand>
</feature>
<feature type="binding site" evidence="1">
    <location>
        <position position="268"/>
    </location>
    <ligand>
        <name>Mg(2+)</name>
        <dbReference type="ChEBI" id="CHEBI:18420"/>
        <label>2</label>
    </ligand>
</feature>
<feature type="binding site" evidence="1">
    <location>
        <begin position="312"/>
        <end position="314"/>
    </location>
    <ligand>
        <name>substrate</name>
    </ligand>
</feature>
<feature type="binding site" evidence="1">
    <location>
        <position position="491"/>
    </location>
    <ligand>
        <name>ATP</name>
        <dbReference type="ChEBI" id="CHEBI:30616"/>
    </ligand>
</feature>
<feature type="binding site" evidence="1">
    <location>
        <position position="528"/>
    </location>
    <ligand>
        <name>ATP</name>
        <dbReference type="ChEBI" id="CHEBI:30616"/>
    </ligand>
</feature>
<feature type="binding site" evidence="1">
    <location>
        <position position="529"/>
    </location>
    <ligand>
        <name>Mg(2+)</name>
        <dbReference type="ChEBI" id="CHEBI:18420"/>
        <label>1</label>
    </ligand>
</feature>
<feature type="binding site" evidence="1">
    <location>
        <position position="531"/>
    </location>
    <ligand>
        <name>substrate</name>
    </ligand>
</feature>
<feature type="sequence conflict" description="In Ref. 1; AAF23789." evidence="2" ref="1">
    <original>E</original>
    <variation>K</variation>
    <location>
        <position position="38"/>
    </location>
</feature>
<feature type="sequence conflict" description="In Ref. 1; AAF23789." evidence="2" ref="1">
    <original>NA</original>
    <variation>KH</variation>
    <location>
        <begin position="130"/>
        <end position="131"/>
    </location>
</feature>
<feature type="sequence conflict" description="In Ref. 1; AAF23789." evidence="2" ref="1">
    <original>G</original>
    <variation>A</variation>
    <location>
        <position position="187"/>
    </location>
</feature>
<feature type="sequence conflict" description="In Ref. 1; AAF23789." evidence="2" ref="1">
    <original>E</original>
    <variation>K</variation>
    <location>
        <position position="595"/>
    </location>
</feature>
<dbReference type="EC" id="6.3.5.3" evidence="1"/>
<dbReference type="EMBL" id="AF213822">
    <property type="protein sequence ID" value="AAF23789.1"/>
    <property type="molecule type" value="Genomic_DNA"/>
</dbReference>
<dbReference type="EMBL" id="AE008692">
    <property type="protein sequence ID" value="AAV89444.1"/>
    <property type="molecule type" value="Genomic_DNA"/>
</dbReference>
<dbReference type="RefSeq" id="WP_011240690.1">
    <property type="nucleotide sequence ID" value="NZ_CP035711.1"/>
</dbReference>
<dbReference type="SMR" id="Q9REQ6"/>
<dbReference type="STRING" id="264203.ZMO0820"/>
<dbReference type="KEGG" id="zmo:ZMO0820"/>
<dbReference type="eggNOG" id="COG0046">
    <property type="taxonomic scope" value="Bacteria"/>
</dbReference>
<dbReference type="HOGENOM" id="CLU_003100_0_1_5"/>
<dbReference type="UniPathway" id="UPA00074">
    <property type="reaction ID" value="UER00128"/>
</dbReference>
<dbReference type="Proteomes" id="UP000001173">
    <property type="component" value="Chromosome"/>
</dbReference>
<dbReference type="GO" id="GO:0005737">
    <property type="term" value="C:cytoplasm"/>
    <property type="evidence" value="ECO:0007669"/>
    <property type="project" value="UniProtKB-SubCell"/>
</dbReference>
<dbReference type="GO" id="GO:0005524">
    <property type="term" value="F:ATP binding"/>
    <property type="evidence" value="ECO:0007669"/>
    <property type="project" value="UniProtKB-UniRule"/>
</dbReference>
<dbReference type="GO" id="GO:0000287">
    <property type="term" value="F:magnesium ion binding"/>
    <property type="evidence" value="ECO:0007669"/>
    <property type="project" value="UniProtKB-UniRule"/>
</dbReference>
<dbReference type="GO" id="GO:0004642">
    <property type="term" value="F:phosphoribosylformylglycinamidine synthase activity"/>
    <property type="evidence" value="ECO:0007669"/>
    <property type="project" value="UniProtKB-UniRule"/>
</dbReference>
<dbReference type="GO" id="GO:0006189">
    <property type="term" value="P:'de novo' IMP biosynthetic process"/>
    <property type="evidence" value="ECO:0007669"/>
    <property type="project" value="UniProtKB-UniRule"/>
</dbReference>
<dbReference type="CDD" id="cd02203">
    <property type="entry name" value="PurL_repeat1"/>
    <property type="match status" value="1"/>
</dbReference>
<dbReference type="CDD" id="cd02204">
    <property type="entry name" value="PurL_repeat2"/>
    <property type="match status" value="1"/>
</dbReference>
<dbReference type="FunFam" id="3.30.1330.10:FF:000004">
    <property type="entry name" value="Phosphoribosylformylglycinamidine synthase subunit PurL"/>
    <property type="match status" value="1"/>
</dbReference>
<dbReference type="Gene3D" id="3.90.650.10">
    <property type="entry name" value="PurM-like C-terminal domain"/>
    <property type="match status" value="2"/>
</dbReference>
<dbReference type="Gene3D" id="3.30.1330.10">
    <property type="entry name" value="PurM-like, N-terminal domain"/>
    <property type="match status" value="2"/>
</dbReference>
<dbReference type="HAMAP" id="MF_00420">
    <property type="entry name" value="PurL_2"/>
    <property type="match status" value="1"/>
</dbReference>
<dbReference type="InterPro" id="IPR010074">
    <property type="entry name" value="PRibForGlyAmidine_synth_PurL"/>
</dbReference>
<dbReference type="InterPro" id="IPR041609">
    <property type="entry name" value="PurL_linker"/>
</dbReference>
<dbReference type="InterPro" id="IPR010918">
    <property type="entry name" value="PurM-like_C_dom"/>
</dbReference>
<dbReference type="InterPro" id="IPR036676">
    <property type="entry name" value="PurM-like_C_sf"/>
</dbReference>
<dbReference type="InterPro" id="IPR016188">
    <property type="entry name" value="PurM-like_N"/>
</dbReference>
<dbReference type="InterPro" id="IPR036921">
    <property type="entry name" value="PurM-like_N_sf"/>
</dbReference>
<dbReference type="NCBIfam" id="TIGR01736">
    <property type="entry name" value="FGAM_synth_II"/>
    <property type="match status" value="1"/>
</dbReference>
<dbReference type="NCBIfam" id="NF002290">
    <property type="entry name" value="PRK01213.1"/>
    <property type="match status" value="1"/>
</dbReference>
<dbReference type="PANTHER" id="PTHR43555">
    <property type="entry name" value="PHOSPHORIBOSYLFORMYLGLYCINAMIDINE SYNTHASE SUBUNIT PURL"/>
    <property type="match status" value="1"/>
</dbReference>
<dbReference type="PANTHER" id="PTHR43555:SF1">
    <property type="entry name" value="PHOSPHORIBOSYLFORMYLGLYCINAMIDINE SYNTHASE SUBUNIT PURL"/>
    <property type="match status" value="1"/>
</dbReference>
<dbReference type="Pfam" id="PF00586">
    <property type="entry name" value="AIRS"/>
    <property type="match status" value="2"/>
</dbReference>
<dbReference type="Pfam" id="PF02769">
    <property type="entry name" value="AIRS_C"/>
    <property type="match status" value="2"/>
</dbReference>
<dbReference type="Pfam" id="PF18072">
    <property type="entry name" value="FGAR-AT_linker"/>
    <property type="match status" value="1"/>
</dbReference>
<dbReference type="PIRSF" id="PIRSF001587">
    <property type="entry name" value="FGAM_synthase_II"/>
    <property type="match status" value="1"/>
</dbReference>
<dbReference type="SUPFAM" id="SSF56042">
    <property type="entry name" value="PurM C-terminal domain-like"/>
    <property type="match status" value="2"/>
</dbReference>
<dbReference type="SUPFAM" id="SSF55326">
    <property type="entry name" value="PurM N-terminal domain-like"/>
    <property type="match status" value="2"/>
</dbReference>
<organism>
    <name type="scientific">Zymomonas mobilis subsp. mobilis (strain ATCC 31821 / ZM4 / CP4)</name>
    <dbReference type="NCBI Taxonomy" id="264203"/>
    <lineage>
        <taxon>Bacteria</taxon>
        <taxon>Pseudomonadati</taxon>
        <taxon>Pseudomonadota</taxon>
        <taxon>Alphaproteobacteria</taxon>
        <taxon>Sphingomonadales</taxon>
        <taxon>Zymomonadaceae</taxon>
        <taxon>Zymomonas</taxon>
    </lineage>
</organism>
<sequence>MTEENSSITAETVASHGLSPEEYDTIKQALGRTPNLVELGIFSAMWSEHCSYKSSRKHLRELPTTGSQVICGPGENAGVVDIGDGQAAIFKMESHNHPSYIEPYQGAATGVGGILRDVFTMGARPVANLNALRFGSPKHPKTPHLVSGVVAGIGGYGNCVGVPTVGGEVNFHPAYDGNNLVNAMTVGVAETNKIFYSAASGAGNPIVYVGSKTGRDGIHGATMASADFGKDAEEKRPTVQVGDPFSEKLLIEACLELMASDAIVAIQDMGAAGLTSSAVEMASKGEVGIELDMDMVPCREEGMTPYEMMLSESQERMLMVLKPGREAEAEAIFKKWELDFAIIGRVTDSKHMVLTWKGDIVCDIPLAPLADNAPCYDRPWVATPKAKALGAVPASGSITDNLVTLVGSPDLASRRWIWEQYDNMVGADTVQCPGGDAAVVRVHGTEKALAMSVDVTPRYCRADPEEGGKQAVAECYRNITAVGALPLASTDCLNFGNPERPEIMGQIVGAIKGIGEACRALDMPIVSGNVSLYNETRQDDGSSLAILPTPTIGGVGLLQDWRDSTTIAFKNTGEEIYLVGNSGQGHLGQSIWLREIAGREEGTAPSVDLAQEKATGDFIRAMIQDGMLCAVHDISDGGLAVALAEMALAGNIGATVEAHDKAIAEHAYYFGEDQGRYLVSSTNAVALVSAAEKAGIPVFRLGVTGGDAVVLNSQSVSLEKLRKSHEAFLPELMQ</sequence>
<comment type="function">
    <text evidence="1">Part of the phosphoribosylformylglycinamidine synthase complex involved in the purines biosynthetic pathway. Catalyzes the ATP-dependent conversion of formylglycinamide ribonucleotide (FGAR) and glutamine to yield formylglycinamidine ribonucleotide (FGAM) and glutamate. The FGAM synthase complex is composed of three subunits. PurQ produces an ammonia molecule by converting glutamine to glutamate. PurL transfers the ammonia molecule to FGAR to form FGAM in an ATP-dependent manner. PurS interacts with PurQ and PurL and is thought to assist in the transfer of the ammonia molecule from PurQ to PurL.</text>
</comment>
<comment type="catalytic activity">
    <reaction evidence="1">
        <text>N(2)-formyl-N(1)-(5-phospho-beta-D-ribosyl)glycinamide + L-glutamine + ATP + H2O = 2-formamido-N(1)-(5-O-phospho-beta-D-ribosyl)acetamidine + L-glutamate + ADP + phosphate + H(+)</text>
        <dbReference type="Rhea" id="RHEA:17129"/>
        <dbReference type="ChEBI" id="CHEBI:15377"/>
        <dbReference type="ChEBI" id="CHEBI:15378"/>
        <dbReference type="ChEBI" id="CHEBI:29985"/>
        <dbReference type="ChEBI" id="CHEBI:30616"/>
        <dbReference type="ChEBI" id="CHEBI:43474"/>
        <dbReference type="ChEBI" id="CHEBI:58359"/>
        <dbReference type="ChEBI" id="CHEBI:147286"/>
        <dbReference type="ChEBI" id="CHEBI:147287"/>
        <dbReference type="ChEBI" id="CHEBI:456216"/>
        <dbReference type="EC" id="6.3.5.3"/>
    </reaction>
</comment>
<comment type="pathway">
    <text evidence="1">Purine metabolism; IMP biosynthesis via de novo pathway; 5-amino-1-(5-phospho-D-ribosyl)imidazole from N(2)-formyl-N(1)-(5-phospho-D-ribosyl)glycinamide: step 1/2.</text>
</comment>
<comment type="subunit">
    <text evidence="1">Monomer. Part of the FGAM synthase complex composed of 1 PurL, 1 PurQ and 2 PurS subunits.</text>
</comment>
<comment type="subcellular location">
    <subcellularLocation>
        <location evidence="1">Cytoplasm</location>
    </subcellularLocation>
</comment>
<comment type="similarity">
    <text evidence="1">Belongs to the FGAMS family.</text>
</comment>